<sequence length="581" mass="61124">MHPRYSPAPPLQQQQQQHQQMTGIGGPGGLLRGPANNSQQLPPQMPRSQNYANGSSSSAAAASAVTAAPPTPRSAFPVAPLTASAVALKGAIPQRPPAMTSPAAAAAGAALAAGAPYRGATSWTPQGYAPAAAAAAAAVAQQAAAYRYTAPLPQPAYAAYTPHTATTPATTTYGQRVPTAASPSNTNSSSSSNTGSQSGTLSTSLSHTTNTNTNMGPNGTAQNQNQQGGGGEQLSKTNLYIRGLQQGTTDKDLVNMCAQYGTIISTKAILDKTTNKCKGYGFVDFEQPAYAENAVKGLQAKGVQAQMAKQQEQDPTNLYIANLPPHFKETDLEAMLSKYGQVVSTRILRDQQMNSKGVGFARMESREKCEQIIQMFNGNTIPGAKDPLLVKFADGGPKKKNLFKTPDPNTRAWRDVSAEGIPVAYDPTLQQNGVSVNVGTPIGVPYSRFSAPPVGGYPVAGSQWIPGYMMTQPITQVDDQYMQMAAPQLGVTSYKPEAVNQVQPRGISMMVSGDTGVPYGTMMPQLATLQIGNSYISPTYPYYAPPPTIIPTMPMTDSEQASTAASPDEAYTQYPHQAAPK</sequence>
<gene>
    <name evidence="1" type="primary">shep</name>
    <name type="ORF">GK17327</name>
</gene>
<comment type="function">
    <text evidence="1">Has a role in the perception of gravity.</text>
</comment>
<comment type="miscellaneous">
    <text>Named after Alan Bartlett Shepard, Jr. who was the second person and the first American in space and the fifth person to walk on the moon.</text>
</comment>
<comment type="sequence caution" evidence="4">
    <conflict type="erroneous gene model prediction">
        <sequence resource="EMBL-CDS" id="EDW73032"/>
    </conflict>
</comment>
<keyword id="KW-0597">Phosphoprotein</keyword>
<keyword id="KW-1185">Reference proteome</keyword>
<keyword id="KW-0677">Repeat</keyword>
<keyword id="KW-0694">RNA-binding</keyword>
<feature type="chain" id="PRO_0000379504" description="Protein alan shepard">
    <location>
        <begin position="1"/>
        <end position="581"/>
    </location>
</feature>
<feature type="domain" description="RRM 1" evidence="2">
    <location>
        <begin position="237"/>
        <end position="310"/>
    </location>
</feature>
<feature type="domain" description="RRM 2" evidence="2">
    <location>
        <begin position="316"/>
        <end position="395"/>
    </location>
</feature>
<feature type="region of interest" description="Disordered" evidence="3">
    <location>
        <begin position="1"/>
        <end position="73"/>
    </location>
</feature>
<feature type="region of interest" description="Disordered" evidence="3">
    <location>
        <begin position="168"/>
        <end position="234"/>
    </location>
</feature>
<feature type="region of interest" description="Disordered" evidence="3">
    <location>
        <begin position="555"/>
        <end position="581"/>
    </location>
</feature>
<feature type="compositionally biased region" description="Pro residues" evidence="3">
    <location>
        <begin position="1"/>
        <end position="10"/>
    </location>
</feature>
<feature type="compositionally biased region" description="Polar residues" evidence="3">
    <location>
        <begin position="35"/>
        <end position="54"/>
    </location>
</feature>
<feature type="compositionally biased region" description="Low complexity" evidence="3">
    <location>
        <begin position="55"/>
        <end position="68"/>
    </location>
</feature>
<feature type="compositionally biased region" description="Low complexity" evidence="3">
    <location>
        <begin position="168"/>
        <end position="226"/>
    </location>
</feature>
<feature type="modified residue" description="Phosphotyrosine" evidence="1">
    <location>
        <position position="5"/>
    </location>
</feature>
<feature type="modified residue" description="Phosphotyrosine" evidence="1">
    <location>
        <position position="128"/>
    </location>
</feature>
<feature type="modified residue" description="Phosphotyrosine" evidence="1">
    <location>
        <position position="146"/>
    </location>
</feature>
<protein>
    <recommendedName>
        <fullName>Protein alan shepard</fullName>
    </recommendedName>
</protein>
<name>SHEP_DROWI</name>
<proteinExistence type="inferred from homology"/>
<dbReference type="EMBL" id="CH963847">
    <property type="protein sequence ID" value="EDW73032.1"/>
    <property type="status" value="ALT_SEQ"/>
    <property type="molecule type" value="Genomic_DNA"/>
</dbReference>
<dbReference type="RefSeq" id="XP_002062046.2">
    <property type="nucleotide sequence ID" value="XM_002062010.2"/>
</dbReference>
<dbReference type="SMR" id="B4MM23"/>
<dbReference type="eggNOG" id="KOG4733">
    <property type="taxonomic scope" value="Eukaryota"/>
</dbReference>
<dbReference type="OrthoDB" id="271725at2759"/>
<dbReference type="Proteomes" id="UP000007798">
    <property type="component" value="Unassembled WGS sequence"/>
</dbReference>
<dbReference type="GO" id="GO:1990904">
    <property type="term" value="C:ribonucleoprotein complex"/>
    <property type="evidence" value="ECO:0007669"/>
    <property type="project" value="InterPro"/>
</dbReference>
<dbReference type="GO" id="GO:0003723">
    <property type="term" value="F:RNA binding"/>
    <property type="evidence" value="ECO:0007669"/>
    <property type="project" value="UniProtKB-KW"/>
</dbReference>
<dbReference type="GO" id="GO:0009629">
    <property type="term" value="P:response to gravity"/>
    <property type="evidence" value="ECO:0000250"/>
    <property type="project" value="UniProtKB"/>
</dbReference>
<dbReference type="CDD" id="cd12244">
    <property type="entry name" value="RRM2_MSSP"/>
    <property type="match status" value="1"/>
</dbReference>
<dbReference type="FunFam" id="3.30.70.330:FF:000169">
    <property type="entry name" value="protein alan shepard isoform X4"/>
    <property type="match status" value="1"/>
</dbReference>
<dbReference type="FunFam" id="3.30.70.330:FF:000491">
    <property type="entry name" value="protein alan shepard isoform X6"/>
    <property type="match status" value="1"/>
</dbReference>
<dbReference type="Gene3D" id="3.30.70.330">
    <property type="match status" value="2"/>
</dbReference>
<dbReference type="InterPro" id="IPR002343">
    <property type="entry name" value="Hud_Sxl_RNA"/>
</dbReference>
<dbReference type="InterPro" id="IPR012677">
    <property type="entry name" value="Nucleotide-bd_a/b_plait_sf"/>
</dbReference>
<dbReference type="InterPro" id="IPR035979">
    <property type="entry name" value="RBD_domain_sf"/>
</dbReference>
<dbReference type="InterPro" id="IPR000504">
    <property type="entry name" value="RRM_dom"/>
</dbReference>
<dbReference type="PANTHER" id="PTHR24012">
    <property type="entry name" value="RNA BINDING PROTEIN"/>
    <property type="match status" value="1"/>
</dbReference>
<dbReference type="Pfam" id="PF00076">
    <property type="entry name" value="RRM_1"/>
    <property type="match status" value="2"/>
</dbReference>
<dbReference type="PRINTS" id="PR00961">
    <property type="entry name" value="HUDSXLRNA"/>
</dbReference>
<dbReference type="SMART" id="SM00360">
    <property type="entry name" value="RRM"/>
    <property type="match status" value="2"/>
</dbReference>
<dbReference type="SUPFAM" id="SSF54928">
    <property type="entry name" value="RNA-binding domain, RBD"/>
    <property type="match status" value="2"/>
</dbReference>
<dbReference type="PROSITE" id="PS50102">
    <property type="entry name" value="RRM"/>
    <property type="match status" value="2"/>
</dbReference>
<organism>
    <name type="scientific">Drosophila willistoni</name>
    <name type="common">Fruit fly</name>
    <dbReference type="NCBI Taxonomy" id="7260"/>
    <lineage>
        <taxon>Eukaryota</taxon>
        <taxon>Metazoa</taxon>
        <taxon>Ecdysozoa</taxon>
        <taxon>Arthropoda</taxon>
        <taxon>Hexapoda</taxon>
        <taxon>Insecta</taxon>
        <taxon>Pterygota</taxon>
        <taxon>Neoptera</taxon>
        <taxon>Endopterygota</taxon>
        <taxon>Diptera</taxon>
        <taxon>Brachycera</taxon>
        <taxon>Muscomorpha</taxon>
        <taxon>Ephydroidea</taxon>
        <taxon>Drosophilidae</taxon>
        <taxon>Drosophila</taxon>
        <taxon>Sophophora</taxon>
    </lineage>
</organism>
<reference evidence="5" key="1">
    <citation type="journal article" date="2007" name="Nature">
        <title>Evolution of genes and genomes on the Drosophila phylogeny.</title>
        <authorList>
            <consortium name="Drosophila 12 genomes consortium"/>
        </authorList>
    </citation>
    <scope>NUCLEOTIDE SEQUENCE [LARGE SCALE GENOMIC DNA]</scope>
    <source>
        <strain evidence="5">Tucson 14030-0811.24</strain>
    </source>
</reference>
<accession>B4MM23</accession>
<evidence type="ECO:0000250" key="1">
    <source>
        <dbReference type="UniProtKB" id="Q8MSV2"/>
    </source>
</evidence>
<evidence type="ECO:0000255" key="2">
    <source>
        <dbReference type="PROSITE-ProRule" id="PRU00176"/>
    </source>
</evidence>
<evidence type="ECO:0000256" key="3">
    <source>
        <dbReference type="SAM" id="MobiDB-lite"/>
    </source>
</evidence>
<evidence type="ECO:0000305" key="4"/>
<evidence type="ECO:0000312" key="5">
    <source>
        <dbReference type="EMBL" id="EDW73032.1"/>
    </source>
</evidence>